<feature type="chain" id="PRO_1000076606" description="Phosphoglycerate kinase">
    <location>
        <begin position="1"/>
        <end position="391"/>
    </location>
</feature>
<feature type="binding site" evidence="1">
    <location>
        <begin position="21"/>
        <end position="23"/>
    </location>
    <ligand>
        <name>substrate</name>
    </ligand>
</feature>
<feature type="binding site" evidence="1">
    <location>
        <position position="36"/>
    </location>
    <ligand>
        <name>substrate</name>
    </ligand>
</feature>
<feature type="binding site" evidence="1">
    <location>
        <begin position="59"/>
        <end position="62"/>
    </location>
    <ligand>
        <name>substrate</name>
    </ligand>
</feature>
<feature type="binding site" evidence="1">
    <location>
        <position position="113"/>
    </location>
    <ligand>
        <name>substrate</name>
    </ligand>
</feature>
<feature type="binding site" evidence="1">
    <location>
        <position position="146"/>
    </location>
    <ligand>
        <name>substrate</name>
    </ligand>
</feature>
<feature type="binding site" evidence="1">
    <location>
        <position position="197"/>
    </location>
    <ligand>
        <name>ATP</name>
        <dbReference type="ChEBI" id="CHEBI:30616"/>
    </ligand>
</feature>
<feature type="binding site" evidence="1">
    <location>
        <position position="319"/>
    </location>
    <ligand>
        <name>ATP</name>
        <dbReference type="ChEBI" id="CHEBI:30616"/>
    </ligand>
</feature>
<feature type="binding site" evidence="1">
    <location>
        <begin position="345"/>
        <end position="348"/>
    </location>
    <ligand>
        <name>ATP</name>
        <dbReference type="ChEBI" id="CHEBI:30616"/>
    </ligand>
</feature>
<name>PGK_SHEB9</name>
<sequence length="391" mass="40611">MAIINMSDLDLQGKRVLIREDLNVPVSNGVVTSDARLRASLPTIELALAKGAAVMVMSHLGRPTEGEYNPEYSMQPVVDYLAKALSCPVRLATDYLDGVDVAVGEVVVFENVRFNVGEGKNNEALSQKMAALCDVYVMDAFGTAHRAQASTHGVGMFAPIACAGPLLAQELDALGKALDNPARPMVAIVGGSKVSTKLTVLESLSGIVDQLVVGGGIANTFIAAAGYNVGKSLYEADLIDEAKRLVANAKSRGADIPVPTDVVVAGEFSPTAAATLKSVSEVADGEMIFDIGPDSAEALAKIIESAGTIVWNGPVGVFEFDQFGEGTKRIAQAIADSKAFSIAGGGDTLAAVDKYGIADKVSYISTGGGAFLEFLEGKELPAVAMLEKRGA</sequence>
<proteinExistence type="inferred from homology"/>
<accession>A9L1M3</accession>
<reference key="1">
    <citation type="submission" date="2007-11" db="EMBL/GenBank/DDBJ databases">
        <title>Complete sequence of chromosome of Shewanella baltica OS195.</title>
        <authorList>
            <consortium name="US DOE Joint Genome Institute"/>
            <person name="Copeland A."/>
            <person name="Lucas S."/>
            <person name="Lapidus A."/>
            <person name="Barry K."/>
            <person name="Glavina del Rio T."/>
            <person name="Dalin E."/>
            <person name="Tice H."/>
            <person name="Pitluck S."/>
            <person name="Chain P."/>
            <person name="Malfatti S."/>
            <person name="Shin M."/>
            <person name="Vergez L."/>
            <person name="Schmutz J."/>
            <person name="Larimer F."/>
            <person name="Land M."/>
            <person name="Hauser L."/>
            <person name="Kyrpides N."/>
            <person name="Kim E."/>
            <person name="Brettar I."/>
            <person name="Rodrigues J."/>
            <person name="Konstantinidis K."/>
            <person name="Klappenbach J."/>
            <person name="Hofle M."/>
            <person name="Tiedje J."/>
            <person name="Richardson P."/>
        </authorList>
    </citation>
    <scope>NUCLEOTIDE SEQUENCE [LARGE SCALE GENOMIC DNA]</scope>
    <source>
        <strain>OS195</strain>
    </source>
</reference>
<evidence type="ECO:0000255" key="1">
    <source>
        <dbReference type="HAMAP-Rule" id="MF_00145"/>
    </source>
</evidence>
<keyword id="KW-0067">ATP-binding</keyword>
<keyword id="KW-0963">Cytoplasm</keyword>
<keyword id="KW-0324">Glycolysis</keyword>
<keyword id="KW-0418">Kinase</keyword>
<keyword id="KW-0547">Nucleotide-binding</keyword>
<keyword id="KW-0808">Transferase</keyword>
<protein>
    <recommendedName>
        <fullName evidence="1">Phosphoglycerate kinase</fullName>
        <ecNumber evidence="1">2.7.2.3</ecNumber>
    </recommendedName>
</protein>
<gene>
    <name evidence="1" type="primary">pgk</name>
    <name type="ordered locus">Sbal195_3657</name>
</gene>
<comment type="catalytic activity">
    <reaction evidence="1">
        <text>(2R)-3-phosphoglycerate + ATP = (2R)-3-phospho-glyceroyl phosphate + ADP</text>
        <dbReference type="Rhea" id="RHEA:14801"/>
        <dbReference type="ChEBI" id="CHEBI:30616"/>
        <dbReference type="ChEBI" id="CHEBI:57604"/>
        <dbReference type="ChEBI" id="CHEBI:58272"/>
        <dbReference type="ChEBI" id="CHEBI:456216"/>
        <dbReference type="EC" id="2.7.2.3"/>
    </reaction>
</comment>
<comment type="pathway">
    <text evidence="1">Carbohydrate degradation; glycolysis; pyruvate from D-glyceraldehyde 3-phosphate: step 2/5.</text>
</comment>
<comment type="subunit">
    <text evidence="1">Monomer.</text>
</comment>
<comment type="subcellular location">
    <subcellularLocation>
        <location evidence="1">Cytoplasm</location>
    </subcellularLocation>
</comment>
<comment type="similarity">
    <text evidence="1">Belongs to the phosphoglycerate kinase family.</text>
</comment>
<dbReference type="EC" id="2.7.2.3" evidence="1"/>
<dbReference type="EMBL" id="CP000891">
    <property type="protein sequence ID" value="ABX50819.1"/>
    <property type="molecule type" value="Genomic_DNA"/>
</dbReference>
<dbReference type="RefSeq" id="WP_006080336.1">
    <property type="nucleotide sequence ID" value="NC_009997.1"/>
</dbReference>
<dbReference type="SMR" id="A9L1M3"/>
<dbReference type="KEGG" id="sbn:Sbal195_3657"/>
<dbReference type="HOGENOM" id="CLU_025427_0_2_6"/>
<dbReference type="UniPathway" id="UPA00109">
    <property type="reaction ID" value="UER00185"/>
</dbReference>
<dbReference type="Proteomes" id="UP000000770">
    <property type="component" value="Chromosome"/>
</dbReference>
<dbReference type="GO" id="GO:0005829">
    <property type="term" value="C:cytosol"/>
    <property type="evidence" value="ECO:0007669"/>
    <property type="project" value="TreeGrafter"/>
</dbReference>
<dbReference type="GO" id="GO:0043531">
    <property type="term" value="F:ADP binding"/>
    <property type="evidence" value="ECO:0007669"/>
    <property type="project" value="TreeGrafter"/>
</dbReference>
<dbReference type="GO" id="GO:0005524">
    <property type="term" value="F:ATP binding"/>
    <property type="evidence" value="ECO:0007669"/>
    <property type="project" value="UniProtKB-KW"/>
</dbReference>
<dbReference type="GO" id="GO:0004618">
    <property type="term" value="F:phosphoglycerate kinase activity"/>
    <property type="evidence" value="ECO:0007669"/>
    <property type="project" value="UniProtKB-UniRule"/>
</dbReference>
<dbReference type="GO" id="GO:0006094">
    <property type="term" value="P:gluconeogenesis"/>
    <property type="evidence" value="ECO:0007669"/>
    <property type="project" value="TreeGrafter"/>
</dbReference>
<dbReference type="GO" id="GO:0006096">
    <property type="term" value="P:glycolytic process"/>
    <property type="evidence" value="ECO:0007669"/>
    <property type="project" value="UniProtKB-UniRule"/>
</dbReference>
<dbReference type="FunFam" id="3.40.50.1260:FF:000001">
    <property type="entry name" value="Phosphoglycerate kinase"/>
    <property type="match status" value="1"/>
</dbReference>
<dbReference type="FunFam" id="3.40.50.1260:FF:000002">
    <property type="entry name" value="Phosphoglycerate kinase"/>
    <property type="match status" value="1"/>
</dbReference>
<dbReference type="Gene3D" id="3.40.50.1260">
    <property type="entry name" value="Phosphoglycerate kinase, N-terminal domain"/>
    <property type="match status" value="2"/>
</dbReference>
<dbReference type="HAMAP" id="MF_00145">
    <property type="entry name" value="Phosphoglyc_kinase"/>
    <property type="match status" value="1"/>
</dbReference>
<dbReference type="InterPro" id="IPR001576">
    <property type="entry name" value="Phosphoglycerate_kinase"/>
</dbReference>
<dbReference type="InterPro" id="IPR015911">
    <property type="entry name" value="Phosphoglycerate_kinase_CS"/>
</dbReference>
<dbReference type="InterPro" id="IPR015824">
    <property type="entry name" value="Phosphoglycerate_kinase_N"/>
</dbReference>
<dbReference type="InterPro" id="IPR036043">
    <property type="entry name" value="Phosphoglycerate_kinase_sf"/>
</dbReference>
<dbReference type="PANTHER" id="PTHR11406">
    <property type="entry name" value="PHOSPHOGLYCERATE KINASE"/>
    <property type="match status" value="1"/>
</dbReference>
<dbReference type="PANTHER" id="PTHR11406:SF23">
    <property type="entry name" value="PHOSPHOGLYCERATE KINASE 1, CHLOROPLASTIC-RELATED"/>
    <property type="match status" value="1"/>
</dbReference>
<dbReference type="Pfam" id="PF00162">
    <property type="entry name" value="PGK"/>
    <property type="match status" value="1"/>
</dbReference>
<dbReference type="PIRSF" id="PIRSF000724">
    <property type="entry name" value="Pgk"/>
    <property type="match status" value="1"/>
</dbReference>
<dbReference type="PRINTS" id="PR00477">
    <property type="entry name" value="PHGLYCKINASE"/>
</dbReference>
<dbReference type="SUPFAM" id="SSF53748">
    <property type="entry name" value="Phosphoglycerate kinase"/>
    <property type="match status" value="1"/>
</dbReference>
<dbReference type="PROSITE" id="PS00111">
    <property type="entry name" value="PGLYCERATE_KINASE"/>
    <property type="match status" value="1"/>
</dbReference>
<organism>
    <name type="scientific">Shewanella baltica (strain OS195)</name>
    <dbReference type="NCBI Taxonomy" id="399599"/>
    <lineage>
        <taxon>Bacteria</taxon>
        <taxon>Pseudomonadati</taxon>
        <taxon>Pseudomonadota</taxon>
        <taxon>Gammaproteobacteria</taxon>
        <taxon>Alteromonadales</taxon>
        <taxon>Shewanellaceae</taxon>
        <taxon>Shewanella</taxon>
    </lineage>
</organism>